<proteinExistence type="evidence at protein level"/>
<organismHost>
    <name type="scientific">Bos taurus</name>
    <name type="common">Bovine</name>
    <dbReference type="NCBI Taxonomy" id="9913"/>
</organismHost>
<organism>
    <name type="scientific">Vaccinia virus (strain Western Reserve)</name>
    <name type="common">VACV</name>
    <name type="synonym">Vaccinia virus (strain WR)</name>
    <dbReference type="NCBI Taxonomy" id="10254"/>
    <lineage>
        <taxon>Viruses</taxon>
        <taxon>Varidnaviria</taxon>
        <taxon>Bamfordvirae</taxon>
        <taxon>Nucleocytoviricota</taxon>
        <taxon>Pokkesviricetes</taxon>
        <taxon>Chitovirales</taxon>
        <taxon>Poxviridae</taxon>
        <taxon>Chordopoxvirinae</taxon>
        <taxon>Orthopoxvirus</taxon>
        <taxon>Vaccinia virus</taxon>
    </lineage>
</organism>
<protein>
    <recommendedName>
        <fullName>Protein OPG176</fullName>
    </recommendedName>
</protein>
<keyword id="KW-0002">3D-structure</keyword>
<keyword id="KW-0244">Early protein</keyword>
<keyword id="KW-0945">Host-virus interaction</keyword>
<keyword id="KW-1090">Inhibition of host innate immune response by virus</keyword>
<keyword id="KW-1092">Inhibition of host IRF3 by virus</keyword>
<keyword id="KW-1100">Inhibition of host NF-kappa-B by virus</keyword>
<keyword id="KW-1113">Inhibition of host RLR pathway by virus</keyword>
<keyword id="KW-1185">Reference proteome</keyword>
<keyword id="KW-0899">Viral immunoevasion</keyword>
<name>PG176_VACCW</name>
<gene>
    <name type="primary">OPG176</name>
    <name type="ordered locus">VACWR172</name>
    <name type="ORF">A46R</name>
</gene>
<reference key="1">
    <citation type="journal article" date="1991" name="J. Virol.">
        <title>Sequence analysis, expression, and deletion of a vaccinia virus gene encoding a homolog of profilin, a eukaryotic actin-binding protein.</title>
        <authorList>
            <person name="Blasco R."/>
            <person name="Cole N.B."/>
            <person name="Moss B."/>
        </authorList>
    </citation>
    <scope>NUCLEOTIDE SEQUENCE [GENOMIC DNA]</scope>
</reference>
<reference key="2">
    <citation type="journal article" date="1991" name="J. Gen. Virol.">
        <title>Nucleotide sequence of 42 kbp of vaccinia virus strain WR from near the right inverted terminal repeat.</title>
        <authorList>
            <person name="Smith G.L."/>
            <person name="Chan Y.S."/>
            <person name="Howard S.T."/>
        </authorList>
    </citation>
    <scope>NUCLEOTIDE SEQUENCE [GENOMIC DNA]</scope>
</reference>
<reference key="3">
    <citation type="submission" date="2003-02" db="EMBL/GenBank/DDBJ databases">
        <title>Sequencing of the coding region of Vaccinia-WR to an average 9-fold redundancy and an error rate of 0.16/10kb.</title>
        <authorList>
            <person name="Esposito J.J."/>
            <person name="Frace A.M."/>
            <person name="Sammons S.A."/>
            <person name="Olsen-Rasmussen M."/>
            <person name="Osborne J."/>
            <person name="Wohlhueter R."/>
        </authorList>
    </citation>
    <scope>NUCLEOTIDE SEQUENCE [LARGE SCALE GENOMIC DNA]</scope>
</reference>
<reference key="4">
    <citation type="journal article" date="2006" name="Virol. J.">
        <title>Pox proteomics: mass spectrometry analysis and identification of Vaccinia virion proteins.</title>
        <authorList>
            <person name="Yoder J.D."/>
            <person name="Chen T.S."/>
            <person name="Gagnier C.R."/>
            <person name="Vemulapalli S."/>
            <person name="Maier C.S."/>
            <person name="Hruby D.E."/>
        </authorList>
    </citation>
    <scope>IDENTIFICATION BY MASS SPECTROMETRY</scope>
</reference>
<reference key="5">
    <citation type="journal article" date="2010" name="J. Immunol.">
        <title>Viral inhibitory peptide of TLR4, a peptide derived from vaccinia protein A46, specifically inhibits TLR4 by directly targeting MyD88 adaptor-like and TRIF-related adaptor molecule.</title>
        <authorList>
            <person name="Lysakova-Devine T."/>
            <person name="Keogh B."/>
            <person name="Harrington B."/>
            <person name="Nagpal K."/>
            <person name="Halle A."/>
            <person name="Golenbock D.T."/>
            <person name="Monie T."/>
            <person name="Bowie A.G."/>
        </authorList>
    </citation>
    <scope>FUNCTION</scope>
    <scope>INTERACTION WITH HOST MYD88; TRF4; TICAM2 AND MAL</scope>
</reference>
<reference key="6">
    <citation type="journal article" date="2016" name="PLoS Pathog.">
        <title>Vaccinia Virus Immunomodulator A46: A Lipid and Protein-Binding Scaffold for Sequestering Host TIR-Domain Proteins.</title>
        <authorList>
            <person name="Fedosyuk S."/>
            <person name="Bezerra G.A."/>
            <person name="Radakovics K."/>
            <person name="Smith T.K."/>
            <person name="Sammito M."/>
            <person name="Bobik N."/>
            <person name="Round A."/>
            <person name="Ten Eyck L.F."/>
            <person name="Djinovic-Carugo K."/>
            <person name="Uson I."/>
            <person name="Skern T."/>
        </authorList>
    </citation>
    <scope>FUNCTION</scope>
    <scope>SUBUNIT</scope>
</reference>
<reference key="7">
    <citation type="journal article" date="2014" name="J. Biol. Chem.">
        <title>Characterization and structure of the vaccinia virus NF-kappaB antagonist A46.</title>
        <authorList>
            <person name="Fedosyuk S."/>
            <person name="Grishkovskaya I."/>
            <person name="de Almeida Ribeiro E. Jr."/>
            <person name="Skern T."/>
        </authorList>
    </citation>
    <scope>X-RAY CRYSTALLOGRAPHY (1.99 ANGSTROMS) OF 87-229</scope>
</reference>
<sequence>MAFDISVNASKTINALVYFSTQQNKLVIRNEVNDTHYTVEFDRDKVVDTFISYNRHNDTIEIRGVLPEETNIGCAVNTPVSMTYLYNKYSFKLILAEYIRHRNTISGNIYSALMTLDDLAIKQYGDIDLLFNEKLKVDSDSGLFDFVNFVKDMICCDSRIVVALSSLVSKHWELTNKKYRCMALAEHISDSIPISELSRLRYNLCKYLRGHTESIEDKFDYFEDDDSSTCSAVTDRETDV</sequence>
<accession>P26672</accession>
<accession>Q76ZN1</accession>
<comment type="function">
    <text evidence="1 2">BCL2-like protein which disrupts the host immune response by inhibiting the TLR4 signaling pathway leading to NF-kappa-B activation. Acts close to the plasma membrane and targets several host TIR-domain containing adapter proteins including MYD88, TIRAP, TRIF and TICAM2. In turn, blocks the host NF-kappa-B and TRIF-mediated IRF3 activation.</text>
</comment>
<comment type="subunit">
    <text evidence="1 2">Tetramer (PubMed:27973613). Interacts with host MYD88, TRF4, TICAM2 and MAL (PubMed:20802145).</text>
</comment>
<comment type="induction">
    <text>Expressed in the early phase of the viral replicative cycle.</text>
</comment>
<comment type="similarity">
    <text evidence="3">Belongs to the orthopoxvirus OPG176 family.</text>
</comment>
<dbReference type="EMBL" id="M72474">
    <property type="protein sequence ID" value="AAA48313.1"/>
    <property type="molecule type" value="Genomic_DNA"/>
</dbReference>
<dbReference type="EMBL" id="D11079">
    <property type="protein sequence ID" value="BAA01820.1"/>
    <property type="molecule type" value="Genomic_DNA"/>
</dbReference>
<dbReference type="EMBL" id="AY243312">
    <property type="protein sequence ID" value="AAO89451.1"/>
    <property type="molecule type" value="Genomic_DNA"/>
</dbReference>
<dbReference type="PIR" id="JQ1784">
    <property type="entry name" value="JQ1784"/>
</dbReference>
<dbReference type="RefSeq" id="YP_233054.1">
    <property type="nucleotide sequence ID" value="NC_006998.1"/>
</dbReference>
<dbReference type="PDB" id="4LQK">
    <property type="method" value="X-ray"/>
    <property type="resolution" value="1.99 A"/>
    <property type="chains" value="A/B/C/D=87-229"/>
</dbReference>
<dbReference type="PDB" id="5EZU">
    <property type="method" value="X-ray"/>
    <property type="resolution" value="1.55 A"/>
    <property type="chains" value="A/B=1-83"/>
</dbReference>
<dbReference type="PDBsum" id="4LQK"/>
<dbReference type="PDBsum" id="5EZU"/>
<dbReference type="SASBDB" id="P26672"/>
<dbReference type="SMR" id="P26672"/>
<dbReference type="ELM" id="P26672"/>
<dbReference type="DNASU" id="3707702"/>
<dbReference type="GeneID" id="3707702"/>
<dbReference type="KEGG" id="vg:3707702"/>
<dbReference type="EvolutionaryTrace" id="P26672"/>
<dbReference type="Proteomes" id="UP000000344">
    <property type="component" value="Genome"/>
</dbReference>
<dbReference type="GO" id="GO:0031234">
    <property type="term" value="C:extrinsic component of cytoplasmic side of plasma membrane"/>
    <property type="evidence" value="ECO:0000305"/>
    <property type="project" value="UniProt"/>
</dbReference>
<dbReference type="GO" id="GO:0140311">
    <property type="term" value="F:protein sequestering activity"/>
    <property type="evidence" value="ECO:0000314"/>
    <property type="project" value="UniProt"/>
</dbReference>
<dbReference type="GO" id="GO:0039548">
    <property type="term" value="P:symbiont-mediated suppression of host cytoplasmic pattern recognition receptor signaling pathway via inhibition of IRF3 activity"/>
    <property type="evidence" value="ECO:0007669"/>
    <property type="project" value="UniProtKB-KW"/>
</dbReference>
<dbReference type="GO" id="GO:0085034">
    <property type="term" value="P:symbiont-mediated suppression of host NF-kappaB cascade"/>
    <property type="evidence" value="ECO:0007669"/>
    <property type="project" value="UniProtKB-KW"/>
</dbReference>
<dbReference type="GO" id="GO:0039722">
    <property type="term" value="P:symbiont-mediated suppression of host toll-like receptor signaling pathway"/>
    <property type="evidence" value="ECO:0000314"/>
    <property type="project" value="UniProt"/>
</dbReference>
<dbReference type="Gene3D" id="1.10.437.20">
    <property type="entry name" value="dsDNA poxvirus"/>
    <property type="match status" value="1"/>
</dbReference>
<dbReference type="InterPro" id="IPR022819">
    <property type="entry name" value="Poxvirus_Bcl-2-like"/>
</dbReference>
<dbReference type="InterPro" id="IPR043018">
    <property type="entry name" value="Poxvirus_sf"/>
</dbReference>
<dbReference type="Pfam" id="PF06227">
    <property type="entry name" value="Poxv_Bcl-2-like"/>
    <property type="match status" value="1"/>
</dbReference>
<feature type="chain" id="PRO_0000099335" description="Protein OPG176">
    <location>
        <begin position="1"/>
        <end position="240"/>
    </location>
</feature>
<feature type="strand" evidence="5">
    <location>
        <begin position="2"/>
        <end position="8"/>
    </location>
</feature>
<feature type="strand" evidence="5">
    <location>
        <begin position="13"/>
        <end position="20"/>
    </location>
</feature>
<feature type="turn" evidence="5">
    <location>
        <begin position="21"/>
        <end position="24"/>
    </location>
</feature>
<feature type="strand" evidence="5">
    <location>
        <begin position="25"/>
        <end position="32"/>
    </location>
</feature>
<feature type="strand" evidence="5">
    <location>
        <begin position="35"/>
        <end position="41"/>
    </location>
</feature>
<feature type="strand" evidence="5">
    <location>
        <begin position="47"/>
        <end position="54"/>
    </location>
</feature>
<feature type="turn" evidence="5">
    <location>
        <begin position="55"/>
        <end position="58"/>
    </location>
</feature>
<feature type="strand" evidence="5">
    <location>
        <begin position="59"/>
        <end position="65"/>
    </location>
</feature>
<feature type="strand" evidence="5">
    <location>
        <begin position="71"/>
        <end position="75"/>
    </location>
</feature>
<feature type="helix" evidence="4">
    <location>
        <begin position="91"/>
        <end position="101"/>
    </location>
</feature>
<feature type="turn" evidence="4">
    <location>
        <begin position="102"/>
        <end position="104"/>
    </location>
</feature>
<feature type="helix" evidence="4">
    <location>
        <begin position="108"/>
        <end position="114"/>
    </location>
</feature>
<feature type="helix" evidence="4">
    <location>
        <begin position="117"/>
        <end position="124"/>
    </location>
</feature>
<feature type="helix" evidence="4">
    <location>
        <begin position="127"/>
        <end position="132"/>
    </location>
</feature>
<feature type="turn" evidence="4">
    <location>
        <begin position="133"/>
        <end position="135"/>
    </location>
</feature>
<feature type="helix" evidence="4">
    <location>
        <begin position="142"/>
        <end position="150"/>
    </location>
</feature>
<feature type="turn" evidence="4">
    <location>
        <begin position="151"/>
        <end position="156"/>
    </location>
</feature>
<feature type="helix" evidence="4">
    <location>
        <begin position="158"/>
        <end position="173"/>
    </location>
</feature>
<feature type="turn" evidence="4">
    <location>
        <begin position="174"/>
        <end position="176"/>
    </location>
</feature>
<feature type="helix" evidence="4">
    <location>
        <begin position="178"/>
        <end position="191"/>
    </location>
</feature>
<feature type="helix" evidence="4">
    <location>
        <begin position="194"/>
        <end position="208"/>
    </location>
</feature>
<evidence type="ECO:0000269" key="1">
    <source>
    </source>
</evidence>
<evidence type="ECO:0000269" key="2">
    <source>
    </source>
</evidence>
<evidence type="ECO:0000305" key="3"/>
<evidence type="ECO:0007829" key="4">
    <source>
        <dbReference type="PDB" id="4LQK"/>
    </source>
</evidence>
<evidence type="ECO:0007829" key="5">
    <source>
        <dbReference type="PDB" id="5EZU"/>
    </source>
</evidence>